<protein>
    <recommendedName>
        <fullName evidence="1">Orotidine 5'-phosphate decarboxylase</fullName>
        <ecNumber evidence="1">4.1.1.23</ecNumber>
    </recommendedName>
    <alternativeName>
        <fullName evidence="1">OMP decarboxylase</fullName>
        <shortName evidence="1">OMPDCase</shortName>
        <shortName evidence="1">OMPdecase</shortName>
    </alternativeName>
</protein>
<sequence>MTFRETVCATARRNRSWLCIGLDPEPMRMPVHLPADAEGVYAFCAAIMDATSDLVCAFKPNIAFFEAFGAAGWSALERLIRLRPGPPIILDAKRGDIGSTAEAYARAAFEVLDADAVTVNPYLGGDALEPFLRHSQRGCFILCKTSNPGSHDLQDMRLADGRPLYLAVAEMARDRWNMHGNTGLVVGATHPTAITEVRRACPDMLLLVPGIGAQGGDLDTTVRAAAAVDEPLMMINVSRTVLYADRGTNFAAAARTTALRLRDAINAALMAR</sequence>
<proteinExistence type="inferred from homology"/>
<reference key="1">
    <citation type="submission" date="2007-04" db="EMBL/GenBank/DDBJ databases">
        <title>Complete sequence of Roseiflexus sp. RS-1.</title>
        <authorList>
            <consortium name="US DOE Joint Genome Institute"/>
            <person name="Copeland A."/>
            <person name="Lucas S."/>
            <person name="Lapidus A."/>
            <person name="Barry K."/>
            <person name="Detter J.C."/>
            <person name="Glavina del Rio T."/>
            <person name="Hammon N."/>
            <person name="Israni S."/>
            <person name="Dalin E."/>
            <person name="Tice H."/>
            <person name="Pitluck S."/>
            <person name="Chertkov O."/>
            <person name="Brettin T."/>
            <person name="Bruce D."/>
            <person name="Han C."/>
            <person name="Schmutz J."/>
            <person name="Larimer F."/>
            <person name="Land M."/>
            <person name="Hauser L."/>
            <person name="Kyrpides N."/>
            <person name="Mikhailova N."/>
            <person name="Bryant D.A."/>
            <person name="Richardson P."/>
        </authorList>
    </citation>
    <scope>NUCLEOTIDE SEQUENCE [LARGE SCALE GENOMIC DNA]</scope>
    <source>
        <strain>RS-1</strain>
    </source>
</reference>
<dbReference type="EC" id="4.1.1.23" evidence="1"/>
<dbReference type="EMBL" id="CP000686">
    <property type="protein sequence ID" value="ABQ88626.1"/>
    <property type="molecule type" value="Genomic_DNA"/>
</dbReference>
<dbReference type="RefSeq" id="WP_011954985.1">
    <property type="nucleotide sequence ID" value="NC_009523.1"/>
</dbReference>
<dbReference type="SMR" id="A5UPS3"/>
<dbReference type="STRING" id="357808.RoseRS_0190"/>
<dbReference type="KEGG" id="rrs:RoseRS_0190"/>
<dbReference type="eggNOG" id="COG0284">
    <property type="taxonomic scope" value="Bacteria"/>
</dbReference>
<dbReference type="HOGENOM" id="CLU_060704_1_0_0"/>
<dbReference type="OrthoDB" id="9808470at2"/>
<dbReference type="UniPathway" id="UPA00070">
    <property type="reaction ID" value="UER00120"/>
</dbReference>
<dbReference type="Proteomes" id="UP000006554">
    <property type="component" value="Chromosome"/>
</dbReference>
<dbReference type="GO" id="GO:0004590">
    <property type="term" value="F:orotidine-5'-phosphate decarboxylase activity"/>
    <property type="evidence" value="ECO:0007669"/>
    <property type="project" value="UniProtKB-UniRule"/>
</dbReference>
<dbReference type="GO" id="GO:0006207">
    <property type="term" value="P:'de novo' pyrimidine nucleobase biosynthetic process"/>
    <property type="evidence" value="ECO:0007669"/>
    <property type="project" value="InterPro"/>
</dbReference>
<dbReference type="GO" id="GO:0044205">
    <property type="term" value="P:'de novo' UMP biosynthetic process"/>
    <property type="evidence" value="ECO:0007669"/>
    <property type="project" value="UniProtKB-UniRule"/>
</dbReference>
<dbReference type="CDD" id="cd04725">
    <property type="entry name" value="OMP_decarboxylase_like"/>
    <property type="match status" value="1"/>
</dbReference>
<dbReference type="Gene3D" id="3.20.20.70">
    <property type="entry name" value="Aldolase class I"/>
    <property type="match status" value="1"/>
</dbReference>
<dbReference type="HAMAP" id="MF_01215">
    <property type="entry name" value="OMPdecase_type2"/>
    <property type="match status" value="1"/>
</dbReference>
<dbReference type="InterPro" id="IPR013785">
    <property type="entry name" value="Aldolase_TIM"/>
</dbReference>
<dbReference type="InterPro" id="IPR018089">
    <property type="entry name" value="OMPdecase_AS"/>
</dbReference>
<dbReference type="InterPro" id="IPR011995">
    <property type="entry name" value="OMPdecase_type-2"/>
</dbReference>
<dbReference type="InterPro" id="IPR001754">
    <property type="entry name" value="OMPdeCOase_dom"/>
</dbReference>
<dbReference type="InterPro" id="IPR011060">
    <property type="entry name" value="RibuloseP-bd_barrel"/>
</dbReference>
<dbReference type="NCBIfam" id="TIGR02127">
    <property type="entry name" value="pyrF_sub2"/>
    <property type="match status" value="1"/>
</dbReference>
<dbReference type="PANTHER" id="PTHR43375">
    <property type="entry name" value="OROTIDINE 5'-PHOSPHATE DECARBOXYLASE"/>
    <property type="match status" value="1"/>
</dbReference>
<dbReference type="PANTHER" id="PTHR43375:SF1">
    <property type="entry name" value="OROTIDINE 5'-PHOSPHATE DECARBOXYLASE"/>
    <property type="match status" value="1"/>
</dbReference>
<dbReference type="Pfam" id="PF00215">
    <property type="entry name" value="OMPdecase"/>
    <property type="match status" value="1"/>
</dbReference>
<dbReference type="SMART" id="SM00934">
    <property type="entry name" value="OMPdecase"/>
    <property type="match status" value="1"/>
</dbReference>
<dbReference type="SUPFAM" id="SSF51366">
    <property type="entry name" value="Ribulose-phoshate binding barrel"/>
    <property type="match status" value="1"/>
</dbReference>
<dbReference type="PROSITE" id="PS00156">
    <property type="entry name" value="OMPDECASE"/>
    <property type="match status" value="1"/>
</dbReference>
<accession>A5UPS3</accession>
<gene>
    <name evidence="1" type="primary">pyrF</name>
    <name type="ordered locus">RoseRS_0190</name>
</gene>
<feature type="chain" id="PRO_1000066487" description="Orotidine 5'-phosphate decarboxylase">
    <location>
        <begin position="1"/>
        <end position="272"/>
    </location>
</feature>
<feature type="active site" description="Proton donor" evidence="1">
    <location>
        <position position="93"/>
    </location>
</feature>
<comment type="catalytic activity">
    <reaction evidence="1">
        <text>orotidine 5'-phosphate + H(+) = UMP + CO2</text>
        <dbReference type="Rhea" id="RHEA:11596"/>
        <dbReference type="ChEBI" id="CHEBI:15378"/>
        <dbReference type="ChEBI" id="CHEBI:16526"/>
        <dbReference type="ChEBI" id="CHEBI:57538"/>
        <dbReference type="ChEBI" id="CHEBI:57865"/>
        <dbReference type="EC" id="4.1.1.23"/>
    </reaction>
</comment>
<comment type="pathway">
    <text evidence="1">Pyrimidine metabolism; UMP biosynthesis via de novo pathway; UMP from orotate: step 2/2.</text>
</comment>
<comment type="similarity">
    <text evidence="1">Belongs to the OMP decarboxylase family. Type 2 subfamily.</text>
</comment>
<name>PYRF_ROSS1</name>
<evidence type="ECO:0000255" key="1">
    <source>
        <dbReference type="HAMAP-Rule" id="MF_01215"/>
    </source>
</evidence>
<organism>
    <name type="scientific">Roseiflexus sp. (strain RS-1)</name>
    <dbReference type="NCBI Taxonomy" id="357808"/>
    <lineage>
        <taxon>Bacteria</taxon>
        <taxon>Bacillati</taxon>
        <taxon>Chloroflexota</taxon>
        <taxon>Chloroflexia</taxon>
        <taxon>Chloroflexales</taxon>
        <taxon>Roseiflexineae</taxon>
        <taxon>Roseiflexaceae</taxon>
        <taxon>Roseiflexus</taxon>
    </lineage>
</organism>
<keyword id="KW-0210">Decarboxylase</keyword>
<keyword id="KW-0456">Lyase</keyword>
<keyword id="KW-0665">Pyrimidine biosynthesis</keyword>